<reference key="1">
    <citation type="submission" date="2008-02" db="EMBL/GenBank/DDBJ databases">
        <title>Complete sequence of Escherichia coli C str. ATCC 8739.</title>
        <authorList>
            <person name="Copeland A."/>
            <person name="Lucas S."/>
            <person name="Lapidus A."/>
            <person name="Glavina del Rio T."/>
            <person name="Dalin E."/>
            <person name="Tice H."/>
            <person name="Bruce D."/>
            <person name="Goodwin L."/>
            <person name="Pitluck S."/>
            <person name="Kiss H."/>
            <person name="Brettin T."/>
            <person name="Detter J.C."/>
            <person name="Han C."/>
            <person name="Kuske C.R."/>
            <person name="Schmutz J."/>
            <person name="Larimer F."/>
            <person name="Land M."/>
            <person name="Hauser L."/>
            <person name="Kyrpides N."/>
            <person name="Mikhailova N."/>
            <person name="Ingram L."/>
            <person name="Richardson P."/>
        </authorList>
    </citation>
    <scope>NUCLEOTIDE SEQUENCE [LARGE SCALE GENOMIC DNA]</scope>
    <source>
        <strain>ATCC 8739 / DSM 1576 / NBRC 3972 / NCIMB 8545 / WDCM 00012 / Crooks</strain>
    </source>
</reference>
<feature type="chain" id="PRO_1000087546" description="Adenine deaminase">
    <location>
        <begin position="1"/>
        <end position="588"/>
    </location>
</feature>
<accession>B1IYS4</accession>
<dbReference type="EC" id="3.5.4.2" evidence="1"/>
<dbReference type="EMBL" id="CP000946">
    <property type="protein sequence ID" value="ACA75721.1"/>
    <property type="molecule type" value="Genomic_DNA"/>
</dbReference>
<dbReference type="SMR" id="B1IYS4"/>
<dbReference type="KEGG" id="ecl:EcolC_0034"/>
<dbReference type="HOGENOM" id="CLU_027935_0_0_6"/>
<dbReference type="GO" id="GO:0000034">
    <property type="term" value="F:adenine deaminase activity"/>
    <property type="evidence" value="ECO:0007669"/>
    <property type="project" value="UniProtKB-UniRule"/>
</dbReference>
<dbReference type="GO" id="GO:0006146">
    <property type="term" value="P:adenine catabolic process"/>
    <property type="evidence" value="ECO:0007669"/>
    <property type="project" value="InterPro"/>
</dbReference>
<dbReference type="CDD" id="cd01295">
    <property type="entry name" value="AdeC"/>
    <property type="match status" value="1"/>
</dbReference>
<dbReference type="FunFam" id="3.20.20.140:FF:000016">
    <property type="entry name" value="Adenine deaminase"/>
    <property type="match status" value="1"/>
</dbReference>
<dbReference type="Gene3D" id="3.20.20.140">
    <property type="entry name" value="Metal-dependent hydrolases"/>
    <property type="match status" value="1"/>
</dbReference>
<dbReference type="Gene3D" id="2.30.40.10">
    <property type="entry name" value="Urease, subunit C, domain 1"/>
    <property type="match status" value="1"/>
</dbReference>
<dbReference type="HAMAP" id="MF_01518">
    <property type="entry name" value="Adenine_deamin"/>
    <property type="match status" value="1"/>
</dbReference>
<dbReference type="InterPro" id="IPR006679">
    <property type="entry name" value="Adenine_deam"/>
</dbReference>
<dbReference type="InterPro" id="IPR026912">
    <property type="entry name" value="Adenine_deam_C"/>
</dbReference>
<dbReference type="InterPro" id="IPR006680">
    <property type="entry name" value="Amidohydro-rel"/>
</dbReference>
<dbReference type="InterPro" id="IPR011059">
    <property type="entry name" value="Metal-dep_hydrolase_composite"/>
</dbReference>
<dbReference type="InterPro" id="IPR032466">
    <property type="entry name" value="Metal_Hydrolase"/>
</dbReference>
<dbReference type="NCBIfam" id="TIGR01178">
    <property type="entry name" value="ade"/>
    <property type="match status" value="1"/>
</dbReference>
<dbReference type="NCBIfam" id="NF007457">
    <property type="entry name" value="PRK10027.1"/>
    <property type="match status" value="1"/>
</dbReference>
<dbReference type="PANTHER" id="PTHR11113:SF2">
    <property type="entry name" value="ADENINE DEAMINASE"/>
    <property type="match status" value="1"/>
</dbReference>
<dbReference type="PANTHER" id="PTHR11113">
    <property type="entry name" value="N-ACETYLGLUCOSAMINE-6-PHOSPHATE DEACETYLASE"/>
    <property type="match status" value="1"/>
</dbReference>
<dbReference type="Pfam" id="PF13382">
    <property type="entry name" value="Adenine_deam_C"/>
    <property type="match status" value="1"/>
</dbReference>
<dbReference type="Pfam" id="PF01979">
    <property type="entry name" value="Amidohydro_1"/>
    <property type="match status" value="1"/>
</dbReference>
<dbReference type="SUPFAM" id="SSF51338">
    <property type="entry name" value="Composite domain of metallo-dependent hydrolases"/>
    <property type="match status" value="1"/>
</dbReference>
<dbReference type="SUPFAM" id="SSF51556">
    <property type="entry name" value="Metallo-dependent hydrolases"/>
    <property type="match status" value="1"/>
</dbReference>
<name>ADEC_ECOLC</name>
<sequence length="588" mass="63709">MNNSINHKFHHISRAEYQELLAVSRGDAVADYIIDNVSILDLINGGEISGPIVIKGRYIAGVGAEYADAPALQRIDARGATAVPGFIDAHLHIESSMMTPVTFETATLPRGLTTVICDPHEIVNVMGEAGFAWFARCAEQARQNQYLQVSSCVPALEGCDVNGASFTLEQMLAWRDHPQVTGLAEMMDYPGVISGQNALLDKLDAFRHLTLDGHCPGLGGKELNAYITAGIENCHESYQLEEGRRKLQLGMSLMIREGSAARNLNALAPLINEFNSPQCMLCTDDRNPWEIAHEGHIDALIRRLIEQHNVPLHVAYRVASWSTARHFGLNHLGLLAPGKQADIVLLSDARKVTVQQVLVKGEPIDAQTLQAEESARLAQSAPPYGNTIARQPVSASDFALQFTPGKRYRVIDVIHNELITHSHSSVYSENGFDRDDVSFIAVLERYGQRLAPACGLLGGFGLNEGALAATVSHDSHNIVVIGRSAEEMALAVNQVIQDGGGLCVVRNGQVQSHLPLPIAGLMSTDTAQSLAEQIDALKAAARECGPLPDEPFIQMAFLSLPVIPALKLTSQGLFDGEKFAFTTLEVTE</sequence>
<organism>
    <name type="scientific">Escherichia coli (strain ATCC 8739 / DSM 1576 / NBRC 3972 / NCIMB 8545 / WDCM 00012 / Crooks)</name>
    <dbReference type="NCBI Taxonomy" id="481805"/>
    <lineage>
        <taxon>Bacteria</taxon>
        <taxon>Pseudomonadati</taxon>
        <taxon>Pseudomonadota</taxon>
        <taxon>Gammaproteobacteria</taxon>
        <taxon>Enterobacterales</taxon>
        <taxon>Enterobacteriaceae</taxon>
        <taxon>Escherichia</taxon>
    </lineage>
</organism>
<keyword id="KW-0378">Hydrolase</keyword>
<keyword id="KW-0464">Manganese</keyword>
<protein>
    <recommendedName>
        <fullName evidence="1">Adenine deaminase</fullName>
        <shortName evidence="1">Adenase</shortName>
        <shortName evidence="1">Adenine aminase</shortName>
        <ecNumber evidence="1">3.5.4.2</ecNumber>
    </recommendedName>
</protein>
<evidence type="ECO:0000255" key="1">
    <source>
        <dbReference type="HAMAP-Rule" id="MF_01518"/>
    </source>
</evidence>
<proteinExistence type="inferred from homology"/>
<gene>
    <name evidence="1" type="primary">ade</name>
    <name type="ordered locus">EcolC_0034</name>
</gene>
<comment type="catalytic activity">
    <reaction evidence="1">
        <text>adenine + H2O + H(+) = hypoxanthine + NH4(+)</text>
        <dbReference type="Rhea" id="RHEA:23688"/>
        <dbReference type="ChEBI" id="CHEBI:15377"/>
        <dbReference type="ChEBI" id="CHEBI:15378"/>
        <dbReference type="ChEBI" id="CHEBI:16708"/>
        <dbReference type="ChEBI" id="CHEBI:17368"/>
        <dbReference type="ChEBI" id="CHEBI:28938"/>
        <dbReference type="EC" id="3.5.4.2"/>
    </reaction>
</comment>
<comment type="cofactor">
    <cofactor evidence="1">
        <name>Mn(2+)</name>
        <dbReference type="ChEBI" id="CHEBI:29035"/>
    </cofactor>
</comment>
<comment type="subunit">
    <text evidence="1">Homodimer.</text>
</comment>
<comment type="similarity">
    <text evidence="1">Belongs to the metallo-dependent hydrolases superfamily. Adenine deaminase family.</text>
</comment>